<sequence>MSVAEQIRTIAAEARQASFAMAKLASAAKDQLLLDMALALINDAPHIIEENKKDLEAGQERGLSAAMLDRLMLNEARVKGMADAIREVAQLPDPVGEVTGMWKRPNDLMVGKMRIPLGVIGIIYESRPNVTSDAAALCLKSGNAVVLRGGSEAIHSNLAIATILKAQLAKHGIPAAALSLIPFVEREGVTEMLKQEEFIDVIIPRGGESLIRFVVENSKIPVIKHYKGVCHIFVDATADFEMAREIIVNAKTQRPGVCNALETLLIHKDIAETFVPFIYEALSSLKVELRGDKTFRQFAPKAAKATEEDWYAEYLELILAAAVVDGLDAAIDHINRYSSLHTESIITGDYANSQRFIREVNSGVVMVNASTRFSDGNQLGLGAEIGISTTKLHSFGPMGLTDLTTTKFIVYGSGQVRP</sequence>
<name>PROA_CITBB</name>
<proteinExistence type="inferred from homology"/>
<protein>
    <recommendedName>
        <fullName evidence="1">Gamma-glutamyl phosphate reductase</fullName>
        <shortName evidence="1">GPR</shortName>
        <ecNumber evidence="1">1.2.1.41</ecNumber>
    </recommendedName>
    <alternativeName>
        <fullName evidence="1">Glutamate-5-semialdehyde dehydrogenase</fullName>
    </alternativeName>
    <alternativeName>
        <fullName evidence="1">Glutamyl-gamma-semialdehyde dehydrogenase</fullName>
        <shortName evidence="1">GSA dehydrogenase</shortName>
    </alternativeName>
</protein>
<comment type="function">
    <text evidence="1">Catalyzes the NADPH-dependent reduction of L-glutamate 5-phosphate into L-glutamate 5-semialdehyde and phosphate. The product spontaneously undergoes cyclization to form 1-pyrroline-5-carboxylate.</text>
</comment>
<comment type="catalytic activity">
    <reaction evidence="1">
        <text>L-glutamate 5-semialdehyde + phosphate + NADP(+) = L-glutamyl 5-phosphate + NADPH + H(+)</text>
        <dbReference type="Rhea" id="RHEA:19541"/>
        <dbReference type="ChEBI" id="CHEBI:15378"/>
        <dbReference type="ChEBI" id="CHEBI:43474"/>
        <dbReference type="ChEBI" id="CHEBI:57783"/>
        <dbReference type="ChEBI" id="CHEBI:58066"/>
        <dbReference type="ChEBI" id="CHEBI:58274"/>
        <dbReference type="ChEBI" id="CHEBI:58349"/>
        <dbReference type="EC" id="1.2.1.41"/>
    </reaction>
</comment>
<comment type="pathway">
    <text evidence="1">Amino-acid biosynthesis; L-proline biosynthesis; L-glutamate 5-semialdehyde from L-glutamate: step 2/2.</text>
</comment>
<comment type="subcellular location">
    <subcellularLocation>
        <location evidence="1">Cytoplasm</location>
    </subcellularLocation>
</comment>
<comment type="similarity">
    <text evidence="1">Belongs to the gamma-glutamyl phosphate reductase family.</text>
</comment>
<keyword id="KW-0028">Amino-acid biosynthesis</keyword>
<keyword id="KW-0963">Cytoplasm</keyword>
<keyword id="KW-0521">NADP</keyword>
<keyword id="KW-0560">Oxidoreductase</keyword>
<keyword id="KW-0641">Proline biosynthesis</keyword>
<keyword id="KW-1185">Reference proteome</keyword>
<feature type="chain" id="PRO_1000123809" description="Gamma-glutamyl phosphate reductase">
    <location>
        <begin position="1"/>
        <end position="418"/>
    </location>
</feature>
<gene>
    <name evidence="1" type="primary">proA</name>
    <name type="ordered locus">Gbem_3778</name>
</gene>
<reference key="1">
    <citation type="submission" date="2008-07" db="EMBL/GenBank/DDBJ databases">
        <title>Complete sequence of Geobacter bemidjiensis BEM.</title>
        <authorList>
            <consortium name="US DOE Joint Genome Institute"/>
            <person name="Lucas S."/>
            <person name="Copeland A."/>
            <person name="Lapidus A."/>
            <person name="Glavina del Rio T."/>
            <person name="Dalin E."/>
            <person name="Tice H."/>
            <person name="Bruce D."/>
            <person name="Goodwin L."/>
            <person name="Pitluck S."/>
            <person name="Kiss H."/>
            <person name="Brettin T."/>
            <person name="Detter J.C."/>
            <person name="Han C."/>
            <person name="Kuske C.R."/>
            <person name="Schmutz J."/>
            <person name="Larimer F."/>
            <person name="Land M."/>
            <person name="Hauser L."/>
            <person name="Kyrpides N."/>
            <person name="Lykidis A."/>
            <person name="Lovley D."/>
            <person name="Richardson P."/>
        </authorList>
    </citation>
    <scope>NUCLEOTIDE SEQUENCE [LARGE SCALE GENOMIC DNA]</scope>
    <source>
        <strain>ATCC BAA-1014 / DSM 16622 / JCM 12645 / Bem</strain>
    </source>
</reference>
<dbReference type="EC" id="1.2.1.41" evidence="1"/>
<dbReference type="EMBL" id="CP001124">
    <property type="protein sequence ID" value="ACH40770.1"/>
    <property type="molecule type" value="Genomic_DNA"/>
</dbReference>
<dbReference type="RefSeq" id="WP_012532206.1">
    <property type="nucleotide sequence ID" value="NC_011146.1"/>
</dbReference>
<dbReference type="SMR" id="B5EEI4"/>
<dbReference type="STRING" id="404380.Gbem_3778"/>
<dbReference type="KEGG" id="gbm:Gbem_3778"/>
<dbReference type="eggNOG" id="COG0014">
    <property type="taxonomic scope" value="Bacteria"/>
</dbReference>
<dbReference type="HOGENOM" id="CLU_030231_0_0_7"/>
<dbReference type="OrthoDB" id="9809970at2"/>
<dbReference type="UniPathway" id="UPA00098">
    <property type="reaction ID" value="UER00360"/>
</dbReference>
<dbReference type="Proteomes" id="UP000008825">
    <property type="component" value="Chromosome"/>
</dbReference>
<dbReference type="GO" id="GO:0005737">
    <property type="term" value="C:cytoplasm"/>
    <property type="evidence" value="ECO:0007669"/>
    <property type="project" value="UniProtKB-SubCell"/>
</dbReference>
<dbReference type="GO" id="GO:0004350">
    <property type="term" value="F:glutamate-5-semialdehyde dehydrogenase activity"/>
    <property type="evidence" value="ECO:0007669"/>
    <property type="project" value="UniProtKB-UniRule"/>
</dbReference>
<dbReference type="GO" id="GO:0050661">
    <property type="term" value="F:NADP binding"/>
    <property type="evidence" value="ECO:0007669"/>
    <property type="project" value="InterPro"/>
</dbReference>
<dbReference type="GO" id="GO:0055129">
    <property type="term" value="P:L-proline biosynthetic process"/>
    <property type="evidence" value="ECO:0007669"/>
    <property type="project" value="UniProtKB-UniRule"/>
</dbReference>
<dbReference type="CDD" id="cd07079">
    <property type="entry name" value="ALDH_F18-19_ProA-GPR"/>
    <property type="match status" value="1"/>
</dbReference>
<dbReference type="FunFam" id="3.40.309.10:FF:000006">
    <property type="entry name" value="Gamma-glutamyl phosphate reductase"/>
    <property type="match status" value="1"/>
</dbReference>
<dbReference type="Gene3D" id="3.40.605.10">
    <property type="entry name" value="Aldehyde Dehydrogenase, Chain A, domain 1"/>
    <property type="match status" value="1"/>
</dbReference>
<dbReference type="Gene3D" id="3.40.309.10">
    <property type="entry name" value="Aldehyde Dehydrogenase, Chain A, domain 2"/>
    <property type="match status" value="1"/>
</dbReference>
<dbReference type="HAMAP" id="MF_00412">
    <property type="entry name" value="ProA"/>
    <property type="match status" value="1"/>
</dbReference>
<dbReference type="InterPro" id="IPR016161">
    <property type="entry name" value="Ald_DH/histidinol_DH"/>
</dbReference>
<dbReference type="InterPro" id="IPR016163">
    <property type="entry name" value="Ald_DH_C"/>
</dbReference>
<dbReference type="InterPro" id="IPR016162">
    <property type="entry name" value="Ald_DH_N"/>
</dbReference>
<dbReference type="InterPro" id="IPR015590">
    <property type="entry name" value="Aldehyde_DH_dom"/>
</dbReference>
<dbReference type="InterPro" id="IPR020593">
    <property type="entry name" value="G-glutamylP_reductase_CS"/>
</dbReference>
<dbReference type="InterPro" id="IPR012134">
    <property type="entry name" value="Glu-5-SA_DH"/>
</dbReference>
<dbReference type="InterPro" id="IPR000965">
    <property type="entry name" value="GPR_dom"/>
</dbReference>
<dbReference type="NCBIfam" id="NF001221">
    <property type="entry name" value="PRK00197.1"/>
    <property type="match status" value="1"/>
</dbReference>
<dbReference type="NCBIfam" id="TIGR00407">
    <property type="entry name" value="proA"/>
    <property type="match status" value="1"/>
</dbReference>
<dbReference type="PANTHER" id="PTHR11063:SF8">
    <property type="entry name" value="DELTA-1-PYRROLINE-5-CARBOXYLATE SYNTHASE"/>
    <property type="match status" value="1"/>
</dbReference>
<dbReference type="PANTHER" id="PTHR11063">
    <property type="entry name" value="GLUTAMATE SEMIALDEHYDE DEHYDROGENASE"/>
    <property type="match status" value="1"/>
</dbReference>
<dbReference type="Pfam" id="PF00171">
    <property type="entry name" value="Aldedh"/>
    <property type="match status" value="1"/>
</dbReference>
<dbReference type="PIRSF" id="PIRSF000151">
    <property type="entry name" value="GPR"/>
    <property type="match status" value="1"/>
</dbReference>
<dbReference type="SUPFAM" id="SSF53720">
    <property type="entry name" value="ALDH-like"/>
    <property type="match status" value="1"/>
</dbReference>
<dbReference type="PROSITE" id="PS01223">
    <property type="entry name" value="PROA"/>
    <property type="match status" value="1"/>
</dbReference>
<evidence type="ECO:0000255" key="1">
    <source>
        <dbReference type="HAMAP-Rule" id="MF_00412"/>
    </source>
</evidence>
<accession>B5EEI4</accession>
<organism>
    <name type="scientific">Citrifermentans bemidjiense (strain ATCC BAA-1014 / DSM 16622 / JCM 12645 / Bem)</name>
    <name type="common">Geobacter bemidjiensis</name>
    <dbReference type="NCBI Taxonomy" id="404380"/>
    <lineage>
        <taxon>Bacteria</taxon>
        <taxon>Pseudomonadati</taxon>
        <taxon>Thermodesulfobacteriota</taxon>
        <taxon>Desulfuromonadia</taxon>
        <taxon>Geobacterales</taxon>
        <taxon>Geobacteraceae</taxon>
        <taxon>Citrifermentans</taxon>
    </lineage>
</organism>